<gene>
    <name evidence="1" type="primary">psbK</name>
    <name type="ORF">JNC0088</name>
</gene>
<protein>
    <recommendedName>
        <fullName evidence="1">Photosystem II reaction center protein K</fullName>
        <shortName evidence="1">PSII-K</shortName>
    </recommendedName>
</protein>
<sequence length="61" mass="6914">MLNIFSLISICLNSALYSSSFFFGKLPEAYAFLNPIVDVMPVIPVFFFLLAFVWQAAVSFR</sequence>
<dbReference type="EMBL" id="DQ673255">
    <property type="protein sequence ID" value="ABG74611.1"/>
    <property type="molecule type" value="Genomic_DNA"/>
</dbReference>
<dbReference type="RefSeq" id="YP_778473.1">
    <property type="nucleotide sequence ID" value="NC_008407.1"/>
</dbReference>
<dbReference type="SMR" id="Q06RE8"/>
<dbReference type="GeneID" id="4319779"/>
<dbReference type="GO" id="GO:0009535">
    <property type="term" value="C:chloroplast thylakoid membrane"/>
    <property type="evidence" value="ECO:0007669"/>
    <property type="project" value="UniProtKB-SubCell"/>
</dbReference>
<dbReference type="GO" id="GO:0009539">
    <property type="term" value="C:photosystem II reaction center"/>
    <property type="evidence" value="ECO:0007669"/>
    <property type="project" value="InterPro"/>
</dbReference>
<dbReference type="GO" id="GO:0015979">
    <property type="term" value="P:photosynthesis"/>
    <property type="evidence" value="ECO:0007669"/>
    <property type="project" value="UniProtKB-UniRule"/>
</dbReference>
<dbReference type="HAMAP" id="MF_00441">
    <property type="entry name" value="PSII_PsbK"/>
    <property type="match status" value="1"/>
</dbReference>
<dbReference type="InterPro" id="IPR003687">
    <property type="entry name" value="PSII_PsbK"/>
</dbReference>
<dbReference type="InterPro" id="IPR037270">
    <property type="entry name" value="PSII_PsbK_sf"/>
</dbReference>
<dbReference type="NCBIfam" id="NF002715">
    <property type="entry name" value="PRK02553.1"/>
    <property type="match status" value="1"/>
</dbReference>
<dbReference type="PANTHER" id="PTHR35325">
    <property type="match status" value="1"/>
</dbReference>
<dbReference type="PANTHER" id="PTHR35325:SF1">
    <property type="entry name" value="PHOTOSYSTEM II REACTION CENTER PROTEIN K"/>
    <property type="match status" value="1"/>
</dbReference>
<dbReference type="Pfam" id="PF02533">
    <property type="entry name" value="PsbK"/>
    <property type="match status" value="1"/>
</dbReference>
<dbReference type="SUPFAM" id="SSF161037">
    <property type="entry name" value="Photosystem II reaction center protein K, PsbK"/>
    <property type="match status" value="1"/>
</dbReference>
<reference key="1">
    <citation type="journal article" date="2007" name="Mol. Biol. Evol.">
        <title>Gene relocations within chloroplast genomes of Jasminum and Menodora (Oleaceae) are due to multiple, overlapping inversions.</title>
        <authorList>
            <person name="Lee H.-L."/>
            <person name="Jansen R.K."/>
            <person name="Chumley T.W."/>
            <person name="Kim K.-J."/>
        </authorList>
    </citation>
    <scope>NUCLEOTIDE SEQUENCE [LARGE SCALE GENOMIC DNA]</scope>
</reference>
<accession>Q06RE8</accession>
<comment type="function">
    <text evidence="1">One of the components of the core complex of photosystem II (PSII). PSII is a light-driven water:plastoquinone oxidoreductase that uses light energy to abstract electrons from H(2)O, generating O(2) and a proton gradient subsequently used for ATP formation. It consists of a core antenna complex that captures photons, and an electron transfer chain that converts photonic excitation into a charge separation.</text>
</comment>
<comment type="subunit">
    <text evidence="1">PSII is composed of 1 copy each of membrane proteins PsbA, PsbB, PsbC, PsbD, PsbE, PsbF, PsbH, PsbI, PsbJ, PsbK, PsbL, PsbM, PsbT, PsbX, PsbY, PsbZ, Psb30/Ycf12, at least 3 peripheral proteins of the oxygen-evolving complex and a large number of cofactors. It forms dimeric complexes.</text>
</comment>
<comment type="subcellular location">
    <subcellularLocation>
        <location evidence="1">Plastid</location>
        <location evidence="1">Chloroplast thylakoid membrane</location>
        <topology evidence="1">Single-pass membrane protein</topology>
    </subcellularLocation>
</comment>
<comment type="similarity">
    <text evidence="1">Belongs to the PsbK family.</text>
</comment>
<name>PSBK_JASNU</name>
<evidence type="ECO:0000255" key="1">
    <source>
        <dbReference type="HAMAP-Rule" id="MF_00441"/>
    </source>
</evidence>
<organism>
    <name type="scientific">Jasminum nudiflorum</name>
    <name type="common">Winter jasmine</name>
    <dbReference type="NCBI Taxonomy" id="126431"/>
    <lineage>
        <taxon>Eukaryota</taxon>
        <taxon>Viridiplantae</taxon>
        <taxon>Streptophyta</taxon>
        <taxon>Embryophyta</taxon>
        <taxon>Tracheophyta</taxon>
        <taxon>Spermatophyta</taxon>
        <taxon>Magnoliopsida</taxon>
        <taxon>eudicotyledons</taxon>
        <taxon>Gunneridae</taxon>
        <taxon>Pentapetalae</taxon>
        <taxon>asterids</taxon>
        <taxon>lamiids</taxon>
        <taxon>Lamiales</taxon>
        <taxon>Oleaceae</taxon>
        <taxon>Jasmineae</taxon>
        <taxon>Jasminum</taxon>
    </lineage>
</organism>
<keyword id="KW-0150">Chloroplast</keyword>
<keyword id="KW-0472">Membrane</keyword>
<keyword id="KW-0602">Photosynthesis</keyword>
<keyword id="KW-0604">Photosystem II</keyword>
<keyword id="KW-0934">Plastid</keyword>
<keyword id="KW-0674">Reaction center</keyword>
<keyword id="KW-0793">Thylakoid</keyword>
<keyword id="KW-0812">Transmembrane</keyword>
<keyword id="KW-1133">Transmembrane helix</keyword>
<geneLocation type="chloroplast"/>
<feature type="propeptide" id="PRO_0000276150" evidence="1">
    <location>
        <begin position="1"/>
        <end position="24"/>
    </location>
</feature>
<feature type="chain" id="PRO_0000276151" description="Photosystem II reaction center protein K" evidence="1">
    <location>
        <begin position="25"/>
        <end position="61"/>
    </location>
</feature>
<feature type="transmembrane region" description="Helical" evidence="1">
    <location>
        <begin position="40"/>
        <end position="60"/>
    </location>
</feature>
<proteinExistence type="inferred from homology"/>